<name>YD415_YEAST</name>
<feature type="signal peptide" evidence="2">
    <location>
        <begin position="1"/>
        <end position="18"/>
    </location>
</feature>
<feature type="chain" id="PRO_0000253823" description="Probable aminopeptidase YDR415C">
    <location>
        <begin position="19"/>
        <end position="374"/>
    </location>
</feature>
<feature type="binding site" evidence="1">
    <location>
        <position position="177"/>
    </location>
    <ligand>
        <name>Zn(2+)</name>
        <dbReference type="ChEBI" id="CHEBI:29105"/>
        <label>1</label>
    </ligand>
</feature>
<feature type="binding site" evidence="1">
    <location>
        <position position="196"/>
    </location>
    <ligand>
        <name>Zn(2+)</name>
        <dbReference type="ChEBI" id="CHEBI:29105"/>
        <label>1</label>
    </ligand>
</feature>
<feature type="binding site" evidence="1">
    <location>
        <position position="196"/>
    </location>
    <ligand>
        <name>Zn(2+)</name>
        <dbReference type="ChEBI" id="CHEBI:29105"/>
        <label>2</label>
        <note>catalytic</note>
    </ligand>
</feature>
<feature type="binding site" evidence="1">
    <location>
        <position position="235"/>
    </location>
    <ligand>
        <name>Zn(2+)</name>
        <dbReference type="ChEBI" id="CHEBI:29105"/>
        <label>2</label>
        <note>catalytic</note>
    </ligand>
</feature>
<feature type="binding site" evidence="1">
    <location>
        <position position="262"/>
    </location>
    <ligand>
        <name>Zn(2+)</name>
        <dbReference type="ChEBI" id="CHEBI:29105"/>
        <label>1</label>
    </ligand>
</feature>
<feature type="binding site" evidence="1">
    <location>
        <position position="340"/>
    </location>
    <ligand>
        <name>Zn(2+)</name>
        <dbReference type="ChEBI" id="CHEBI:29105"/>
        <label>2</label>
        <note>catalytic</note>
    </ligand>
</feature>
<accession>Q04033</accession>
<accession>D6VT46</accession>
<sequence>MRIQSLFVLFNVAIIAWSYPYEPLRVLQVGENEVMEVPESEKLNLRRRGVKFFDVTKHTSFLPFFNKEEEPTVPTYNYPPEISNKEVVDDSIKNIDKGSMHKNLAKFTSFYTRYYKSDHGFESAEWLAATIANITKDIPQDTLTIEHFDHKEWKQYSIIVRVTGSTTPEDIIIIGSHQDSINLLLPSIMAAPGADDNGSGTVTNMEALRLYTENFLKRGFRPNNTVEFHFYSAEEGGLLGSLDVFTAYAKQKKHVRAMLQQDMTGYVSDPEDEHVGIVTDYTTPALTDFIKLIINSYLSIPYRDTQCGYACSDHGSATRNGFPGSFVIESEFKKTNKYIHSTMDTLDRLSLAHMAEHTKIVLGVIIELGSWSAW</sequence>
<keyword id="KW-0031">Aminopeptidase</keyword>
<keyword id="KW-0378">Hydrolase</keyword>
<keyword id="KW-0479">Metal-binding</keyword>
<keyword id="KW-0645">Protease</keyword>
<keyword id="KW-1185">Reference proteome</keyword>
<keyword id="KW-0732">Signal</keyword>
<keyword id="KW-0862">Zinc</keyword>
<proteinExistence type="inferred from homology"/>
<protein>
    <recommendedName>
        <fullName>Probable aminopeptidase YDR415C</fullName>
        <ecNumber>3.4.11.-</ecNumber>
    </recommendedName>
</protein>
<evidence type="ECO:0000250" key="1"/>
<evidence type="ECO:0000255" key="2"/>
<evidence type="ECO:0000305" key="3"/>
<gene>
    <name type="ordered locus">YDR415C</name>
</gene>
<reference key="1">
    <citation type="journal article" date="1997" name="Nature">
        <title>The nucleotide sequence of Saccharomyces cerevisiae chromosome IV.</title>
        <authorList>
            <person name="Jacq C."/>
            <person name="Alt-Moerbe J."/>
            <person name="Andre B."/>
            <person name="Arnold W."/>
            <person name="Bahr A."/>
            <person name="Ballesta J.P.G."/>
            <person name="Bargues M."/>
            <person name="Baron L."/>
            <person name="Becker A."/>
            <person name="Biteau N."/>
            <person name="Bloecker H."/>
            <person name="Blugeon C."/>
            <person name="Boskovic J."/>
            <person name="Brandt P."/>
            <person name="Brueckner M."/>
            <person name="Buitrago M.J."/>
            <person name="Coster F."/>
            <person name="Delaveau T."/>
            <person name="del Rey F."/>
            <person name="Dujon B."/>
            <person name="Eide L.G."/>
            <person name="Garcia-Cantalejo J.M."/>
            <person name="Goffeau A."/>
            <person name="Gomez-Peris A."/>
            <person name="Granotier C."/>
            <person name="Hanemann V."/>
            <person name="Hankeln T."/>
            <person name="Hoheisel J.D."/>
            <person name="Jaeger W."/>
            <person name="Jimenez A."/>
            <person name="Jonniaux J.-L."/>
            <person name="Kraemer C."/>
            <person name="Kuester H."/>
            <person name="Laamanen P."/>
            <person name="Legros Y."/>
            <person name="Louis E.J."/>
            <person name="Moeller-Rieker S."/>
            <person name="Monnet A."/>
            <person name="Moro M."/>
            <person name="Mueller-Auer S."/>
            <person name="Nussbaumer B."/>
            <person name="Paricio N."/>
            <person name="Paulin L."/>
            <person name="Perea J."/>
            <person name="Perez-Alonso M."/>
            <person name="Perez-Ortin J.E."/>
            <person name="Pohl T.M."/>
            <person name="Prydz H."/>
            <person name="Purnelle B."/>
            <person name="Rasmussen S.W."/>
            <person name="Remacha M.A."/>
            <person name="Revuelta J.L."/>
            <person name="Rieger M."/>
            <person name="Salom D."/>
            <person name="Saluz H.P."/>
            <person name="Saiz J.E."/>
            <person name="Saren A.-M."/>
            <person name="Schaefer M."/>
            <person name="Scharfe M."/>
            <person name="Schmidt E.R."/>
            <person name="Schneider C."/>
            <person name="Scholler P."/>
            <person name="Schwarz S."/>
            <person name="Soler-Mira A."/>
            <person name="Urrestarazu L.A."/>
            <person name="Verhasselt P."/>
            <person name="Vissers S."/>
            <person name="Voet M."/>
            <person name="Volckaert G."/>
            <person name="Wagner G."/>
            <person name="Wambutt R."/>
            <person name="Wedler E."/>
            <person name="Wedler H."/>
            <person name="Woelfl S."/>
            <person name="Harris D.E."/>
            <person name="Bowman S."/>
            <person name="Brown D."/>
            <person name="Churcher C.M."/>
            <person name="Connor R."/>
            <person name="Dedman K."/>
            <person name="Gentles S."/>
            <person name="Hamlin N."/>
            <person name="Hunt S."/>
            <person name="Jones L."/>
            <person name="McDonald S."/>
            <person name="Murphy L.D."/>
            <person name="Niblett D."/>
            <person name="Odell C."/>
            <person name="Oliver K."/>
            <person name="Rajandream M.A."/>
            <person name="Richards C."/>
            <person name="Shore L."/>
            <person name="Walsh S.V."/>
            <person name="Barrell B.G."/>
            <person name="Dietrich F.S."/>
            <person name="Mulligan J.T."/>
            <person name="Allen E."/>
            <person name="Araujo R."/>
            <person name="Aviles E."/>
            <person name="Berno A."/>
            <person name="Carpenter J."/>
            <person name="Chen E."/>
            <person name="Cherry J.M."/>
            <person name="Chung E."/>
            <person name="Duncan M."/>
            <person name="Hunicke-Smith S."/>
            <person name="Hyman R.W."/>
            <person name="Komp C."/>
            <person name="Lashkari D."/>
            <person name="Lew H."/>
            <person name="Lin D."/>
            <person name="Mosedale D."/>
            <person name="Nakahara K."/>
            <person name="Namath A."/>
            <person name="Oefner P."/>
            <person name="Oh C."/>
            <person name="Petel F.X."/>
            <person name="Roberts D."/>
            <person name="Schramm S."/>
            <person name="Schroeder M."/>
            <person name="Shogren T."/>
            <person name="Shroff N."/>
            <person name="Winant A."/>
            <person name="Yelton M.A."/>
            <person name="Botstein D."/>
            <person name="Davis R.W."/>
            <person name="Johnston M."/>
            <person name="Andrews S."/>
            <person name="Brinkman R."/>
            <person name="Cooper J."/>
            <person name="Ding H."/>
            <person name="Du Z."/>
            <person name="Favello A."/>
            <person name="Fulton L."/>
            <person name="Gattung S."/>
            <person name="Greco T."/>
            <person name="Hallsworth K."/>
            <person name="Hawkins J."/>
            <person name="Hillier L.W."/>
            <person name="Jier M."/>
            <person name="Johnson D."/>
            <person name="Johnston L."/>
            <person name="Kirsten J."/>
            <person name="Kucaba T."/>
            <person name="Langston Y."/>
            <person name="Latreille P."/>
            <person name="Le T."/>
            <person name="Mardis E."/>
            <person name="Menezes S."/>
            <person name="Miller N."/>
            <person name="Nhan M."/>
            <person name="Pauley A."/>
            <person name="Peluso D."/>
            <person name="Rifkin L."/>
            <person name="Riles L."/>
            <person name="Taich A."/>
            <person name="Trevaskis E."/>
            <person name="Vignati D."/>
            <person name="Wilcox L."/>
            <person name="Wohldman P."/>
            <person name="Vaudin M."/>
            <person name="Wilson R."/>
            <person name="Waterston R."/>
            <person name="Albermann K."/>
            <person name="Hani J."/>
            <person name="Heumann K."/>
            <person name="Kleine K."/>
            <person name="Mewes H.-W."/>
            <person name="Zollner A."/>
            <person name="Zaccaria P."/>
        </authorList>
    </citation>
    <scope>NUCLEOTIDE SEQUENCE [LARGE SCALE GENOMIC DNA]</scope>
    <source>
        <strain>ATCC 204508 / S288c</strain>
    </source>
</reference>
<reference key="2">
    <citation type="journal article" date="2014" name="G3 (Bethesda)">
        <title>The reference genome sequence of Saccharomyces cerevisiae: Then and now.</title>
        <authorList>
            <person name="Engel S.R."/>
            <person name="Dietrich F.S."/>
            <person name="Fisk D.G."/>
            <person name="Binkley G."/>
            <person name="Balakrishnan R."/>
            <person name="Costanzo M.C."/>
            <person name="Dwight S.S."/>
            <person name="Hitz B.C."/>
            <person name="Karra K."/>
            <person name="Nash R.S."/>
            <person name="Weng S."/>
            <person name="Wong E.D."/>
            <person name="Lloyd P."/>
            <person name="Skrzypek M.S."/>
            <person name="Miyasato S.R."/>
            <person name="Simison M."/>
            <person name="Cherry J.M."/>
        </authorList>
    </citation>
    <scope>GENOME REANNOTATION</scope>
    <source>
        <strain>ATCC 204508 / S288c</strain>
    </source>
</reference>
<dbReference type="EC" id="3.4.11.-"/>
<dbReference type="EMBL" id="U33007">
    <property type="protein sequence ID" value="AAB64879.1"/>
    <property type="molecule type" value="Genomic_DNA"/>
</dbReference>
<dbReference type="EMBL" id="BK006938">
    <property type="protein sequence ID" value="DAA12256.1"/>
    <property type="molecule type" value="Genomic_DNA"/>
</dbReference>
<dbReference type="PIR" id="S69699">
    <property type="entry name" value="S69699"/>
</dbReference>
<dbReference type="RefSeq" id="NP_010703.1">
    <property type="nucleotide sequence ID" value="NM_001180723.1"/>
</dbReference>
<dbReference type="SMR" id="Q04033"/>
<dbReference type="BioGRID" id="32474">
    <property type="interactions" value="56"/>
</dbReference>
<dbReference type="DIP" id="DIP-4069N"/>
<dbReference type="FunCoup" id="Q04033">
    <property type="interactions" value="38"/>
</dbReference>
<dbReference type="IntAct" id="Q04033">
    <property type="interactions" value="3"/>
</dbReference>
<dbReference type="MINT" id="Q04033"/>
<dbReference type="STRING" id="4932.YDR415C"/>
<dbReference type="MEROPS" id="M28.006"/>
<dbReference type="PaxDb" id="4932-YDR415C"/>
<dbReference type="PeptideAtlas" id="Q04033"/>
<dbReference type="EnsemblFungi" id="YDR415C_mRNA">
    <property type="protein sequence ID" value="YDR415C"/>
    <property type="gene ID" value="YDR415C"/>
</dbReference>
<dbReference type="GeneID" id="852024"/>
<dbReference type="KEGG" id="sce:YDR415C"/>
<dbReference type="AGR" id="SGD:S000002823"/>
<dbReference type="SGD" id="S000002823">
    <property type="gene designation" value="YDR415C"/>
</dbReference>
<dbReference type="VEuPathDB" id="FungiDB:YDR415C"/>
<dbReference type="eggNOG" id="KOG2195">
    <property type="taxonomic scope" value="Eukaryota"/>
</dbReference>
<dbReference type="GeneTree" id="ENSGT00940000174791"/>
<dbReference type="HOGENOM" id="CLU_025866_0_0_1"/>
<dbReference type="InParanoid" id="Q04033"/>
<dbReference type="OMA" id="GMLQQDM"/>
<dbReference type="OrthoDB" id="2214at2759"/>
<dbReference type="BioCyc" id="YEAST:G3O-29957-MONOMER"/>
<dbReference type="BioGRID-ORCS" id="852024">
    <property type="hits" value="0 hits in 10 CRISPR screens"/>
</dbReference>
<dbReference type="PRO" id="PR:Q04033"/>
<dbReference type="Proteomes" id="UP000002311">
    <property type="component" value="Chromosome IV"/>
</dbReference>
<dbReference type="RNAct" id="Q04033">
    <property type="molecule type" value="protein"/>
</dbReference>
<dbReference type="GO" id="GO:0000324">
    <property type="term" value="C:fungal-type vacuole"/>
    <property type="evidence" value="ECO:0007005"/>
    <property type="project" value="SGD"/>
</dbReference>
<dbReference type="GO" id="GO:0004177">
    <property type="term" value="F:aminopeptidase activity"/>
    <property type="evidence" value="ECO:0007669"/>
    <property type="project" value="UniProtKB-KW"/>
</dbReference>
<dbReference type="GO" id="GO:0046872">
    <property type="term" value="F:metal ion binding"/>
    <property type="evidence" value="ECO:0007669"/>
    <property type="project" value="UniProtKB-KW"/>
</dbReference>
<dbReference type="GO" id="GO:0008235">
    <property type="term" value="F:metalloexopeptidase activity"/>
    <property type="evidence" value="ECO:0007669"/>
    <property type="project" value="InterPro"/>
</dbReference>
<dbReference type="GO" id="GO:0006508">
    <property type="term" value="P:proteolysis"/>
    <property type="evidence" value="ECO:0000318"/>
    <property type="project" value="GO_Central"/>
</dbReference>
<dbReference type="CDD" id="cd03879">
    <property type="entry name" value="M28_AAP"/>
    <property type="match status" value="1"/>
</dbReference>
<dbReference type="FunFam" id="3.40.630.10:FF:000042">
    <property type="entry name" value="Peptide hydrolase"/>
    <property type="match status" value="1"/>
</dbReference>
<dbReference type="Gene3D" id="3.40.630.10">
    <property type="entry name" value="Zn peptidases"/>
    <property type="match status" value="1"/>
</dbReference>
<dbReference type="InterPro" id="IPR045175">
    <property type="entry name" value="M28_fam"/>
</dbReference>
<dbReference type="InterPro" id="IPR007484">
    <property type="entry name" value="Peptidase_M28"/>
</dbReference>
<dbReference type="PANTHER" id="PTHR12147:SF56">
    <property type="entry name" value="AMINOPEPTIDASE YDR415C-RELATED"/>
    <property type="match status" value="1"/>
</dbReference>
<dbReference type="PANTHER" id="PTHR12147">
    <property type="entry name" value="METALLOPEPTIDASE M28 FAMILY MEMBER"/>
    <property type="match status" value="1"/>
</dbReference>
<dbReference type="Pfam" id="PF04389">
    <property type="entry name" value="Peptidase_M28"/>
    <property type="match status" value="1"/>
</dbReference>
<dbReference type="SUPFAM" id="SSF53187">
    <property type="entry name" value="Zn-dependent exopeptidases"/>
    <property type="match status" value="1"/>
</dbReference>
<comment type="cofactor">
    <cofactor evidence="1">
        <name>Zn(2+)</name>
        <dbReference type="ChEBI" id="CHEBI:29105"/>
    </cofactor>
    <text evidence="1">Binds 2 Zn(2+) ions per subunit.</text>
</comment>
<comment type="similarity">
    <text evidence="3">Belongs to the peptidase M28 family. M28E subfamily.</text>
</comment>
<organism>
    <name type="scientific">Saccharomyces cerevisiae (strain ATCC 204508 / S288c)</name>
    <name type="common">Baker's yeast</name>
    <dbReference type="NCBI Taxonomy" id="559292"/>
    <lineage>
        <taxon>Eukaryota</taxon>
        <taxon>Fungi</taxon>
        <taxon>Dikarya</taxon>
        <taxon>Ascomycota</taxon>
        <taxon>Saccharomycotina</taxon>
        <taxon>Saccharomycetes</taxon>
        <taxon>Saccharomycetales</taxon>
        <taxon>Saccharomycetaceae</taxon>
        <taxon>Saccharomyces</taxon>
    </lineage>
</organism>